<evidence type="ECO:0000250" key="1">
    <source>
        <dbReference type="UniProtKB" id="Q04571"/>
    </source>
</evidence>
<evidence type="ECO:0000255" key="2"/>
<evidence type="ECO:0000255" key="3">
    <source>
        <dbReference type="PROSITE-ProRule" id="PRU00498"/>
    </source>
</evidence>
<evidence type="ECO:0000269" key="4">
    <source ref="1"/>
</evidence>
<evidence type="ECO:0000303" key="5">
    <source ref="1"/>
</evidence>
<evidence type="ECO:0000305" key="6"/>
<reference key="1">
    <citation type="journal article" date="2016" name="Mycoscience">
        <title>Further characterization of hydrophobin genes in genome of Flammulina velutipes.</title>
        <authorList>
            <person name="Kim H.-I."/>
            <person name="Lee C.-S."/>
            <person name="Park Y.-J."/>
        </authorList>
    </citation>
    <scope>NUCLEOTIDE SEQUENCE [GENOMIC DNA]</scope>
    <scope>DEVELOPMENTAL STAGE</scope>
    <scope>INDUCTION</scope>
</reference>
<reference key="2">
    <citation type="journal article" date="2020" name="Front. Microbiol.">
        <title>A WD40 Protein Encoding Gene Fvcpc2 Positively Regulates Mushroom Development and Yield in Flammulina velutipes.</title>
        <authorList>
            <person name="Wu T."/>
            <person name="Zhang Z."/>
            <person name="Hu C."/>
            <person name="Zhang L."/>
            <person name="Wei S."/>
            <person name="Li S."/>
        </authorList>
    </citation>
    <scope>INDUCTION</scope>
</reference>
<comment type="function">
    <text evidence="6">Aerial growth, conidiation, and dispersal of filamentous fungi in the environment rely upon a capability of their secreting small amphipathic proteins called hydrophobins (HPBs) with low sequence identity. Class I can self-assemble into an outermost layer of rodlet bundles on aerial cell surfaces, conferring cellular hydrophobicity that supports fungal growth, development and dispersal; whereas Class II form highly ordered films at water-air interfaces through intermolecular interactions but contribute nothing to the rodlet structure.</text>
</comment>
<comment type="subunit">
    <text evidence="1">Self-assembles to form functional amyloid fibrils called rodlets. Self-assembly into fibrillar rodlets occurs spontaneously at hydrophobic:hydrophilic interfaces and the rodlets further associate laterally to form amphipathic monolayers.</text>
</comment>
<comment type="subcellular location">
    <subcellularLocation>
        <location evidence="1">Secreted</location>
    </subcellularLocation>
    <subcellularLocation>
        <location evidence="1">Secreted</location>
        <location evidence="1">Cell wall</location>
    </subcellularLocation>
</comment>
<comment type="developmental stage">
    <text evidence="4">Shows relatively higher levels of expression in the primordial stages and relatively low levels in the mycelial stage.</text>
</comment>
<comment type="induction">
    <text evidence="4">A CT-rich motif, which is often found immediately upstream of the transcription start point of highly expressed filamentous fungal genes, is present at the expected position (Ref.1). One additional CT-rich region is also found upstream of the TATA box in the promoter region (Ref.1).</text>
</comment>
<comment type="similarity">
    <text evidence="6">Belongs to the fungal hydrophobin family.</text>
</comment>
<name>HYD4_FLAVE</name>
<accession>A0A1I9QLC5</accession>
<organism>
    <name type="scientific">Flammulina velutipes</name>
    <name type="common">Agaricus velutipes</name>
    <dbReference type="NCBI Taxonomy" id="38945"/>
    <lineage>
        <taxon>Eukaryota</taxon>
        <taxon>Fungi</taxon>
        <taxon>Dikarya</taxon>
        <taxon>Basidiomycota</taxon>
        <taxon>Agaricomycotina</taxon>
        <taxon>Agaricomycetes</taxon>
        <taxon>Agaricomycetidae</taxon>
        <taxon>Agaricales</taxon>
        <taxon>Marasmiineae</taxon>
        <taxon>Physalacriaceae</taxon>
        <taxon>Flammulina</taxon>
    </lineage>
</organism>
<keyword id="KW-0134">Cell wall</keyword>
<keyword id="KW-1015">Disulfide bond</keyword>
<keyword id="KW-0325">Glycoprotein</keyword>
<keyword id="KW-0964">Secreted</keyword>
<keyword id="KW-0732">Signal</keyword>
<sequence length="122" mass="12208">MFARSAATILAFVLVTLTAATPAYYAPGTKTTSVDKAVPAGQCNVGNQQCCNTVQEASSNPVAGLLGLLGVNVQDVTGLVGLTCNPITGIGGLNSNCDASPVCCENNSFGSLISIGCIPISL</sequence>
<proteinExistence type="evidence at transcript level"/>
<feature type="signal peptide" evidence="2">
    <location>
        <begin position="1"/>
        <end position="20"/>
    </location>
</feature>
<feature type="chain" id="PRO_5013988044" description="Class I hydrophobin 4" evidence="2">
    <location>
        <begin position="21"/>
        <end position="122"/>
    </location>
</feature>
<feature type="glycosylation site" description="N-linked (GlcNAc...) asparagine" evidence="3">
    <location>
        <position position="106"/>
    </location>
</feature>
<feature type="disulfide bond" evidence="1">
    <location>
        <begin position="43"/>
        <end position="103"/>
    </location>
</feature>
<feature type="disulfide bond" evidence="1">
    <location>
        <begin position="50"/>
        <end position="97"/>
    </location>
</feature>
<feature type="disulfide bond" evidence="1">
    <location>
        <begin position="51"/>
        <end position="84"/>
    </location>
</feature>
<feature type="disulfide bond" evidence="1">
    <location>
        <begin position="104"/>
        <end position="117"/>
    </location>
</feature>
<gene>
    <name evidence="5" type="primary">Hyd-4</name>
</gene>
<dbReference type="EMBL" id="KT868836">
    <property type="protein sequence ID" value="AOV80984.1"/>
    <property type="molecule type" value="Genomic_DNA"/>
</dbReference>
<dbReference type="SMR" id="A0A1I9QLC5"/>
<dbReference type="GO" id="GO:0005576">
    <property type="term" value="C:extracellular region"/>
    <property type="evidence" value="ECO:0007669"/>
    <property type="project" value="UniProtKB-KW"/>
</dbReference>
<dbReference type="GO" id="GO:0009277">
    <property type="term" value="C:fungal-type cell wall"/>
    <property type="evidence" value="ECO:0007669"/>
    <property type="project" value="InterPro"/>
</dbReference>
<dbReference type="GO" id="GO:0005199">
    <property type="term" value="F:structural constituent of cell wall"/>
    <property type="evidence" value="ECO:0007669"/>
    <property type="project" value="InterPro"/>
</dbReference>
<dbReference type="CDD" id="cd23507">
    <property type="entry name" value="hydrophobin_I"/>
    <property type="match status" value="1"/>
</dbReference>
<dbReference type="InterPro" id="IPR001338">
    <property type="entry name" value="Hydrophobin"/>
</dbReference>
<dbReference type="Pfam" id="PF01185">
    <property type="entry name" value="Hydrophobin"/>
    <property type="match status" value="1"/>
</dbReference>
<dbReference type="SMART" id="SM00075">
    <property type="entry name" value="HYDRO"/>
    <property type="match status" value="1"/>
</dbReference>
<protein>
    <recommendedName>
        <fullName evidence="5">Class I hydrophobin 4</fullName>
    </recommendedName>
</protein>